<feature type="chain" id="PRO_0000296915" description="Putative manganese efflux pump MntP">
    <location>
        <begin position="1"/>
        <end position="185"/>
    </location>
</feature>
<feature type="transmembrane region" description="Helical" evidence="1">
    <location>
        <begin position="3"/>
        <end position="23"/>
    </location>
</feature>
<feature type="transmembrane region" description="Helical" evidence="1">
    <location>
        <begin position="41"/>
        <end position="61"/>
    </location>
</feature>
<feature type="transmembrane region" description="Helical" evidence="1">
    <location>
        <begin position="70"/>
        <end position="90"/>
    </location>
</feature>
<feature type="transmembrane region" description="Helical" evidence="1">
    <location>
        <begin position="101"/>
        <end position="121"/>
    </location>
</feature>
<feature type="transmembrane region" description="Helical" evidence="1">
    <location>
        <begin position="123"/>
        <end position="143"/>
    </location>
</feature>
<feature type="transmembrane region" description="Helical" evidence="1">
    <location>
        <begin position="165"/>
        <end position="185"/>
    </location>
</feature>
<dbReference type="EMBL" id="CP000494">
    <property type="protein sequence ID" value="ABQ39252.1"/>
    <property type="molecule type" value="Genomic_DNA"/>
</dbReference>
<dbReference type="RefSeq" id="WP_012047153.1">
    <property type="nucleotide sequence ID" value="NC_009485.1"/>
</dbReference>
<dbReference type="STRING" id="288000.BBta_7389"/>
<dbReference type="KEGG" id="bbt:BBta_7389"/>
<dbReference type="eggNOG" id="COG1971">
    <property type="taxonomic scope" value="Bacteria"/>
</dbReference>
<dbReference type="HOGENOM" id="CLU_096410_0_0_5"/>
<dbReference type="OrthoDB" id="9811590at2"/>
<dbReference type="Proteomes" id="UP000000246">
    <property type="component" value="Chromosome"/>
</dbReference>
<dbReference type="GO" id="GO:0005886">
    <property type="term" value="C:plasma membrane"/>
    <property type="evidence" value="ECO:0007669"/>
    <property type="project" value="UniProtKB-SubCell"/>
</dbReference>
<dbReference type="GO" id="GO:0005384">
    <property type="term" value="F:manganese ion transmembrane transporter activity"/>
    <property type="evidence" value="ECO:0007669"/>
    <property type="project" value="UniProtKB-UniRule"/>
</dbReference>
<dbReference type="HAMAP" id="MF_01521">
    <property type="entry name" value="MntP_pump"/>
    <property type="match status" value="1"/>
</dbReference>
<dbReference type="InterPro" id="IPR003810">
    <property type="entry name" value="Mntp/YtaF"/>
</dbReference>
<dbReference type="InterPro" id="IPR022929">
    <property type="entry name" value="Put_MntP"/>
</dbReference>
<dbReference type="PANTHER" id="PTHR35529">
    <property type="entry name" value="MANGANESE EFFLUX PUMP MNTP-RELATED"/>
    <property type="match status" value="1"/>
</dbReference>
<dbReference type="PANTHER" id="PTHR35529:SF1">
    <property type="entry name" value="MANGANESE EFFLUX PUMP MNTP-RELATED"/>
    <property type="match status" value="1"/>
</dbReference>
<dbReference type="Pfam" id="PF02659">
    <property type="entry name" value="Mntp"/>
    <property type="match status" value="1"/>
</dbReference>
<name>MNTP_BRASB</name>
<keyword id="KW-0997">Cell inner membrane</keyword>
<keyword id="KW-1003">Cell membrane</keyword>
<keyword id="KW-0406">Ion transport</keyword>
<keyword id="KW-0464">Manganese</keyword>
<keyword id="KW-0472">Membrane</keyword>
<keyword id="KW-1185">Reference proteome</keyword>
<keyword id="KW-0812">Transmembrane</keyword>
<keyword id="KW-1133">Transmembrane helix</keyword>
<keyword id="KW-0813">Transport</keyword>
<proteinExistence type="inferred from homology"/>
<gene>
    <name evidence="1" type="primary">mntP</name>
    <name type="ordered locus">BBta_7389</name>
</gene>
<comment type="function">
    <text evidence="1">Probably functions as a manganese efflux pump.</text>
</comment>
<comment type="subcellular location">
    <subcellularLocation>
        <location evidence="1">Cell inner membrane</location>
        <topology evidence="1">Multi-pass membrane protein</topology>
    </subcellularLocation>
</comment>
<comment type="similarity">
    <text evidence="1">Belongs to the MntP (TC 9.B.29) family.</text>
</comment>
<organism>
    <name type="scientific">Bradyrhizobium sp. (strain BTAi1 / ATCC BAA-1182)</name>
    <dbReference type="NCBI Taxonomy" id="288000"/>
    <lineage>
        <taxon>Bacteria</taxon>
        <taxon>Pseudomonadati</taxon>
        <taxon>Pseudomonadota</taxon>
        <taxon>Alphaproteobacteria</taxon>
        <taxon>Hyphomicrobiales</taxon>
        <taxon>Nitrobacteraceae</taxon>
        <taxon>Bradyrhizobium</taxon>
    </lineage>
</organism>
<accession>A5ESV8</accession>
<evidence type="ECO:0000255" key="1">
    <source>
        <dbReference type="HAMAP-Rule" id="MF_01521"/>
    </source>
</evidence>
<reference key="1">
    <citation type="journal article" date="2007" name="Science">
        <title>Legumes symbioses: absence of nod genes in photosynthetic bradyrhizobia.</title>
        <authorList>
            <person name="Giraud E."/>
            <person name="Moulin L."/>
            <person name="Vallenet D."/>
            <person name="Barbe V."/>
            <person name="Cytryn E."/>
            <person name="Avarre J.-C."/>
            <person name="Jaubert M."/>
            <person name="Simon D."/>
            <person name="Cartieaux F."/>
            <person name="Prin Y."/>
            <person name="Bena G."/>
            <person name="Hannibal L."/>
            <person name="Fardoux J."/>
            <person name="Kojadinovic M."/>
            <person name="Vuillet L."/>
            <person name="Lajus A."/>
            <person name="Cruveiller S."/>
            <person name="Rouy Z."/>
            <person name="Mangenot S."/>
            <person name="Segurens B."/>
            <person name="Dossat C."/>
            <person name="Franck W.L."/>
            <person name="Chang W.-S."/>
            <person name="Saunders E."/>
            <person name="Bruce D."/>
            <person name="Richardson P."/>
            <person name="Normand P."/>
            <person name="Dreyfus B."/>
            <person name="Pignol D."/>
            <person name="Stacey G."/>
            <person name="Emerich D."/>
            <person name="Vermeglio A."/>
            <person name="Medigue C."/>
            <person name="Sadowsky M."/>
        </authorList>
    </citation>
    <scope>NUCLEOTIDE SEQUENCE [LARGE SCALE GENOMIC DNA]</scope>
    <source>
        <strain>BTAi1 / ATCC BAA-1182</strain>
    </source>
</reference>
<sequence>MSPFAVVLLAFSMSVDAFAVSVGRGAALGRPRYSEALRSGAVFGVVEAITPVIGWVAGVAASSFVQAVDHWLAFGLLAAVGLHMLYAAVWKKADAKPVGRSFTVLMATAIGTSLDAMAVGVSLAFLNVNIVVVATAIGLATFLMSSGGMLIGRLIGEHFGRIAEAVAGIALFGLGLSILIEHLTA</sequence>
<protein>
    <recommendedName>
        <fullName evidence="1">Putative manganese efflux pump MntP</fullName>
    </recommendedName>
</protein>